<accession>Q68WF1</accession>
<gene>
    <name type="ordered locus">RT0576</name>
</gene>
<protein>
    <recommendedName>
        <fullName>SCO2-like protein RT0576</fullName>
    </recommendedName>
</protein>
<evidence type="ECO:0000250" key="1"/>
<evidence type="ECO:0000255" key="2">
    <source>
        <dbReference type="PROSITE-ProRule" id="PRU00691"/>
    </source>
</evidence>
<evidence type="ECO:0000305" key="3"/>
<feature type="chain" id="PRO_0000280798" description="SCO2-like protein RT0576">
    <location>
        <begin position="1"/>
        <end position="203"/>
    </location>
</feature>
<feature type="domain" description="Thioredoxin" evidence="2">
    <location>
        <begin position="42"/>
        <end position="203"/>
    </location>
</feature>
<feature type="binding site" evidence="1">
    <location>
        <position position="80"/>
    </location>
    <ligand>
        <name>Cu cation</name>
        <dbReference type="ChEBI" id="CHEBI:23378"/>
    </ligand>
</feature>
<feature type="binding site" evidence="1">
    <location>
        <position position="84"/>
    </location>
    <ligand>
        <name>Cu cation</name>
        <dbReference type="ChEBI" id="CHEBI:23378"/>
    </ligand>
</feature>
<feature type="binding site" evidence="1">
    <location>
        <position position="170"/>
    </location>
    <ligand>
        <name>Cu cation</name>
        <dbReference type="ChEBI" id="CHEBI:23378"/>
    </ligand>
</feature>
<keyword id="KW-0186">Copper</keyword>
<keyword id="KW-0479">Metal-binding</keyword>
<dbReference type="EMBL" id="AE017197">
    <property type="protein sequence ID" value="AAU04041.1"/>
    <property type="status" value="ALT_INIT"/>
    <property type="molecule type" value="Genomic_DNA"/>
</dbReference>
<dbReference type="RefSeq" id="WP_014419446.1">
    <property type="nucleotide sequence ID" value="NC_006142.1"/>
</dbReference>
<dbReference type="SMR" id="Q68WF1"/>
<dbReference type="KEGG" id="rty:RT0576"/>
<dbReference type="eggNOG" id="COG1999">
    <property type="taxonomic scope" value="Bacteria"/>
</dbReference>
<dbReference type="HOGENOM" id="CLU_050131_3_1_5"/>
<dbReference type="OrthoDB" id="9790194at2"/>
<dbReference type="Proteomes" id="UP000000604">
    <property type="component" value="Chromosome"/>
</dbReference>
<dbReference type="GO" id="GO:0046872">
    <property type="term" value="F:metal ion binding"/>
    <property type="evidence" value="ECO:0007669"/>
    <property type="project" value="UniProtKB-KW"/>
</dbReference>
<dbReference type="CDD" id="cd02968">
    <property type="entry name" value="SCO"/>
    <property type="match status" value="1"/>
</dbReference>
<dbReference type="FunFam" id="3.40.30.10:FF:000013">
    <property type="entry name" value="Blast:Protein SCO1 homolog, mitochondrial"/>
    <property type="match status" value="1"/>
</dbReference>
<dbReference type="Gene3D" id="3.40.30.10">
    <property type="entry name" value="Glutaredoxin"/>
    <property type="match status" value="1"/>
</dbReference>
<dbReference type="InterPro" id="IPR003782">
    <property type="entry name" value="SCO1/SenC"/>
</dbReference>
<dbReference type="InterPro" id="IPR036249">
    <property type="entry name" value="Thioredoxin-like_sf"/>
</dbReference>
<dbReference type="InterPro" id="IPR013766">
    <property type="entry name" value="Thioredoxin_domain"/>
</dbReference>
<dbReference type="PANTHER" id="PTHR12151">
    <property type="entry name" value="ELECTRON TRANSPORT PROTIN SCO1/SENC FAMILY MEMBER"/>
    <property type="match status" value="1"/>
</dbReference>
<dbReference type="PANTHER" id="PTHR12151:SF25">
    <property type="entry name" value="LINALOOL DEHYDRATASE_ISOMERASE DOMAIN-CONTAINING PROTEIN"/>
    <property type="match status" value="1"/>
</dbReference>
<dbReference type="Pfam" id="PF02630">
    <property type="entry name" value="SCO1-SenC"/>
    <property type="match status" value="1"/>
</dbReference>
<dbReference type="SUPFAM" id="SSF52833">
    <property type="entry name" value="Thioredoxin-like"/>
    <property type="match status" value="1"/>
</dbReference>
<dbReference type="PROSITE" id="PS51352">
    <property type="entry name" value="THIOREDOXIN_2"/>
    <property type="match status" value="1"/>
</dbReference>
<sequence>MQSNIMKIIIIVSLLIVVGTLYVLLSLSTPKKPLAGQVNIYKDNIKIGEAFELIDQNGEIFNSNKLRGHLSLIYFGFTSCPDICPTFLNKMTNIVEILHQNQIDIIPIFITIDPKRDTPEVLKEYIKNFHPKFICLTGNEHQIKDVTDKFKILYARVNGYDDDQNYMIDHSSFTYLIDKNGKYIKHFYLDISAKEIMEFLRNE</sequence>
<comment type="similarity">
    <text evidence="3">Belongs to the SCO1/2 family.</text>
</comment>
<comment type="sequence caution" evidence="3">
    <conflict type="erroneous initiation">
        <sequence resource="EMBL-CDS" id="AAU04041"/>
    </conflict>
</comment>
<reference key="1">
    <citation type="journal article" date="2004" name="J. Bacteriol.">
        <title>Complete genome sequence of Rickettsia typhi and comparison with sequences of other Rickettsiae.</title>
        <authorList>
            <person name="McLeod M.P."/>
            <person name="Qin X."/>
            <person name="Karpathy S.E."/>
            <person name="Gioia J."/>
            <person name="Highlander S.K."/>
            <person name="Fox G.E."/>
            <person name="McNeill T.Z."/>
            <person name="Jiang H."/>
            <person name="Muzny D."/>
            <person name="Jacob L.S."/>
            <person name="Hawes A.C."/>
            <person name="Sodergren E."/>
            <person name="Gill R."/>
            <person name="Hume J."/>
            <person name="Morgan M."/>
            <person name="Fan G."/>
            <person name="Amin A.G."/>
            <person name="Gibbs R.A."/>
            <person name="Hong C."/>
            <person name="Yu X.-J."/>
            <person name="Walker D.H."/>
            <person name="Weinstock G.M."/>
        </authorList>
    </citation>
    <scope>NUCLEOTIDE SEQUENCE [LARGE SCALE GENOMIC DNA]</scope>
    <source>
        <strain>ATCC VR-144 / Wilmington</strain>
    </source>
</reference>
<name>SCO22_RICTY</name>
<proteinExistence type="inferred from homology"/>
<organism>
    <name type="scientific">Rickettsia typhi (strain ATCC VR-144 / Wilmington)</name>
    <dbReference type="NCBI Taxonomy" id="257363"/>
    <lineage>
        <taxon>Bacteria</taxon>
        <taxon>Pseudomonadati</taxon>
        <taxon>Pseudomonadota</taxon>
        <taxon>Alphaproteobacteria</taxon>
        <taxon>Rickettsiales</taxon>
        <taxon>Rickettsiaceae</taxon>
        <taxon>Rickettsieae</taxon>
        <taxon>Rickettsia</taxon>
        <taxon>typhus group</taxon>
    </lineage>
</organism>